<sequence>MTMTDPIADMLTRVRNANMVRHEKLELPASNIKKEIAEILKSEGFIKNVEYVEDDKQGVLRLFLKYGQNDERVITGLKRISKPGLRVYAKASEMPKVLNGLGIALVSTSEGVITDKEARKRNVGGEIIAYVW</sequence>
<name>RS8_STAAW</name>
<gene>
    <name evidence="1" type="primary">rpsH</name>
    <name type="ordered locus">MW2155</name>
</gene>
<protein>
    <recommendedName>
        <fullName evidence="1">Small ribosomal subunit protein uS8</fullName>
    </recommendedName>
    <alternativeName>
        <fullName evidence="2">30S ribosomal protein S8</fullName>
    </alternativeName>
</protein>
<dbReference type="EMBL" id="BA000033">
    <property type="protein sequence ID" value="BAB96020.1"/>
    <property type="molecule type" value="Genomic_DNA"/>
</dbReference>
<dbReference type="RefSeq" id="WP_000178881.1">
    <property type="nucleotide sequence ID" value="NC_003923.1"/>
</dbReference>
<dbReference type="PDB" id="8Y38">
    <property type="method" value="EM"/>
    <property type="resolution" value="2.58 A"/>
    <property type="chains" value="h=1-132"/>
</dbReference>
<dbReference type="PDB" id="8Y39">
    <property type="method" value="EM"/>
    <property type="resolution" value="3.60 A"/>
    <property type="chains" value="h=1-132"/>
</dbReference>
<dbReference type="PDBsum" id="8Y38"/>
<dbReference type="PDBsum" id="8Y39"/>
<dbReference type="EMDB" id="EMD-38875"/>
<dbReference type="EMDB" id="EMD-38876"/>
<dbReference type="SMR" id="P66631"/>
<dbReference type="GeneID" id="98346548"/>
<dbReference type="KEGG" id="sam:MW2155"/>
<dbReference type="HOGENOM" id="CLU_098428_0_2_9"/>
<dbReference type="GO" id="GO:1990904">
    <property type="term" value="C:ribonucleoprotein complex"/>
    <property type="evidence" value="ECO:0007669"/>
    <property type="project" value="UniProtKB-KW"/>
</dbReference>
<dbReference type="GO" id="GO:0005840">
    <property type="term" value="C:ribosome"/>
    <property type="evidence" value="ECO:0007669"/>
    <property type="project" value="UniProtKB-KW"/>
</dbReference>
<dbReference type="GO" id="GO:0019843">
    <property type="term" value="F:rRNA binding"/>
    <property type="evidence" value="ECO:0007669"/>
    <property type="project" value="UniProtKB-UniRule"/>
</dbReference>
<dbReference type="GO" id="GO:0003735">
    <property type="term" value="F:structural constituent of ribosome"/>
    <property type="evidence" value="ECO:0007669"/>
    <property type="project" value="InterPro"/>
</dbReference>
<dbReference type="GO" id="GO:0006412">
    <property type="term" value="P:translation"/>
    <property type="evidence" value="ECO:0007669"/>
    <property type="project" value="UniProtKB-UniRule"/>
</dbReference>
<dbReference type="FunFam" id="3.30.1370.30:FF:000002">
    <property type="entry name" value="30S ribosomal protein S8"/>
    <property type="match status" value="1"/>
</dbReference>
<dbReference type="FunFam" id="3.30.1490.10:FF:000001">
    <property type="entry name" value="30S ribosomal protein S8"/>
    <property type="match status" value="1"/>
</dbReference>
<dbReference type="Gene3D" id="3.30.1370.30">
    <property type="match status" value="1"/>
</dbReference>
<dbReference type="Gene3D" id="3.30.1490.10">
    <property type="match status" value="1"/>
</dbReference>
<dbReference type="HAMAP" id="MF_01302_B">
    <property type="entry name" value="Ribosomal_uS8_B"/>
    <property type="match status" value="1"/>
</dbReference>
<dbReference type="InterPro" id="IPR000630">
    <property type="entry name" value="Ribosomal_uS8"/>
</dbReference>
<dbReference type="InterPro" id="IPR047863">
    <property type="entry name" value="Ribosomal_uS8_CS"/>
</dbReference>
<dbReference type="InterPro" id="IPR035987">
    <property type="entry name" value="Ribosomal_uS8_sf"/>
</dbReference>
<dbReference type="NCBIfam" id="NF001109">
    <property type="entry name" value="PRK00136.1"/>
    <property type="match status" value="1"/>
</dbReference>
<dbReference type="PANTHER" id="PTHR11758">
    <property type="entry name" value="40S RIBOSOMAL PROTEIN S15A"/>
    <property type="match status" value="1"/>
</dbReference>
<dbReference type="Pfam" id="PF00410">
    <property type="entry name" value="Ribosomal_S8"/>
    <property type="match status" value="1"/>
</dbReference>
<dbReference type="SUPFAM" id="SSF56047">
    <property type="entry name" value="Ribosomal protein S8"/>
    <property type="match status" value="1"/>
</dbReference>
<dbReference type="PROSITE" id="PS00053">
    <property type="entry name" value="RIBOSOMAL_S8"/>
    <property type="match status" value="1"/>
</dbReference>
<feature type="chain" id="PRO_0000126488" description="Small ribosomal subunit protein uS8">
    <location>
        <begin position="1"/>
        <end position="132"/>
    </location>
</feature>
<organism>
    <name type="scientific">Staphylococcus aureus (strain MW2)</name>
    <dbReference type="NCBI Taxonomy" id="196620"/>
    <lineage>
        <taxon>Bacteria</taxon>
        <taxon>Bacillati</taxon>
        <taxon>Bacillota</taxon>
        <taxon>Bacilli</taxon>
        <taxon>Bacillales</taxon>
        <taxon>Staphylococcaceae</taxon>
        <taxon>Staphylococcus</taxon>
    </lineage>
</organism>
<reference key="1">
    <citation type="journal article" date="2002" name="Lancet">
        <title>Genome and virulence determinants of high virulence community-acquired MRSA.</title>
        <authorList>
            <person name="Baba T."/>
            <person name="Takeuchi F."/>
            <person name="Kuroda M."/>
            <person name="Yuzawa H."/>
            <person name="Aoki K."/>
            <person name="Oguchi A."/>
            <person name="Nagai Y."/>
            <person name="Iwama N."/>
            <person name="Asano K."/>
            <person name="Naimi T."/>
            <person name="Kuroda H."/>
            <person name="Cui L."/>
            <person name="Yamamoto K."/>
            <person name="Hiramatsu K."/>
        </authorList>
    </citation>
    <scope>NUCLEOTIDE SEQUENCE [LARGE SCALE GENOMIC DNA]</scope>
    <source>
        <strain>MW2</strain>
    </source>
</reference>
<evidence type="ECO:0000255" key="1">
    <source>
        <dbReference type="HAMAP-Rule" id="MF_01302"/>
    </source>
</evidence>
<evidence type="ECO:0000305" key="2"/>
<accession>P66631</accession>
<accession>Q99S35</accession>
<comment type="function">
    <text evidence="1">One of the primary rRNA binding proteins, it binds directly to 16S rRNA central domain where it helps coordinate assembly of the platform of the 30S subunit.</text>
</comment>
<comment type="subunit">
    <text evidence="1">Part of the 30S ribosomal subunit. Contacts proteins S5 and S12.</text>
</comment>
<comment type="similarity">
    <text evidence="1">Belongs to the universal ribosomal protein uS8 family.</text>
</comment>
<proteinExistence type="evidence at protein level"/>
<keyword id="KW-0002">3D-structure</keyword>
<keyword id="KW-0687">Ribonucleoprotein</keyword>
<keyword id="KW-0689">Ribosomal protein</keyword>
<keyword id="KW-0694">RNA-binding</keyword>
<keyword id="KW-0699">rRNA-binding</keyword>